<reference key="1">
    <citation type="journal article" date="2003" name="Nat. Genet.">
        <title>Comparative analysis of the genome sequences of Bordetella pertussis, Bordetella parapertussis and Bordetella bronchiseptica.</title>
        <authorList>
            <person name="Parkhill J."/>
            <person name="Sebaihia M."/>
            <person name="Preston A."/>
            <person name="Murphy L.D."/>
            <person name="Thomson N.R."/>
            <person name="Harris D.E."/>
            <person name="Holden M.T.G."/>
            <person name="Churcher C.M."/>
            <person name="Bentley S.D."/>
            <person name="Mungall K.L."/>
            <person name="Cerdeno-Tarraga A.-M."/>
            <person name="Temple L."/>
            <person name="James K.D."/>
            <person name="Harris B."/>
            <person name="Quail M.A."/>
            <person name="Achtman M."/>
            <person name="Atkin R."/>
            <person name="Baker S."/>
            <person name="Basham D."/>
            <person name="Bason N."/>
            <person name="Cherevach I."/>
            <person name="Chillingworth T."/>
            <person name="Collins M."/>
            <person name="Cronin A."/>
            <person name="Davis P."/>
            <person name="Doggett J."/>
            <person name="Feltwell T."/>
            <person name="Goble A."/>
            <person name="Hamlin N."/>
            <person name="Hauser H."/>
            <person name="Holroyd S."/>
            <person name="Jagels K."/>
            <person name="Leather S."/>
            <person name="Moule S."/>
            <person name="Norberczak H."/>
            <person name="O'Neil S."/>
            <person name="Ormond D."/>
            <person name="Price C."/>
            <person name="Rabbinowitsch E."/>
            <person name="Rutter S."/>
            <person name="Sanders M."/>
            <person name="Saunders D."/>
            <person name="Seeger K."/>
            <person name="Sharp S."/>
            <person name="Simmonds M."/>
            <person name="Skelton J."/>
            <person name="Squares R."/>
            <person name="Squares S."/>
            <person name="Stevens K."/>
            <person name="Unwin L."/>
            <person name="Whitehead S."/>
            <person name="Barrell B.G."/>
            <person name="Maskell D.J."/>
        </authorList>
    </citation>
    <scope>NUCLEOTIDE SEQUENCE [LARGE SCALE GENOMIC DNA]</scope>
    <source>
        <strain>12822 / ATCC BAA-587 / NCTC 13253</strain>
    </source>
</reference>
<comment type="function">
    <text evidence="1">Catalyzes the acyloin condensation reaction between C atoms 2 and 3 of pyruvate and glyceraldehyde 3-phosphate to yield 1-deoxy-D-xylulose-5-phosphate (DXP).</text>
</comment>
<comment type="catalytic activity">
    <reaction evidence="1">
        <text>D-glyceraldehyde 3-phosphate + pyruvate + H(+) = 1-deoxy-D-xylulose 5-phosphate + CO2</text>
        <dbReference type="Rhea" id="RHEA:12605"/>
        <dbReference type="ChEBI" id="CHEBI:15361"/>
        <dbReference type="ChEBI" id="CHEBI:15378"/>
        <dbReference type="ChEBI" id="CHEBI:16526"/>
        <dbReference type="ChEBI" id="CHEBI:57792"/>
        <dbReference type="ChEBI" id="CHEBI:59776"/>
        <dbReference type="EC" id="2.2.1.7"/>
    </reaction>
</comment>
<comment type="cofactor">
    <cofactor evidence="1">
        <name>Mg(2+)</name>
        <dbReference type="ChEBI" id="CHEBI:18420"/>
    </cofactor>
    <text evidence="1">Binds 1 Mg(2+) ion per subunit.</text>
</comment>
<comment type="cofactor">
    <cofactor evidence="1">
        <name>thiamine diphosphate</name>
        <dbReference type="ChEBI" id="CHEBI:58937"/>
    </cofactor>
    <text evidence="1">Binds 1 thiamine pyrophosphate per subunit.</text>
</comment>
<comment type="pathway">
    <text evidence="1">Metabolic intermediate biosynthesis; 1-deoxy-D-xylulose 5-phosphate biosynthesis; 1-deoxy-D-xylulose 5-phosphate from D-glyceraldehyde 3-phosphate and pyruvate: step 1/1.</text>
</comment>
<comment type="subunit">
    <text evidence="1">Homodimer.</text>
</comment>
<comment type="similarity">
    <text evidence="1">Belongs to the transketolase family. DXPS subfamily.</text>
</comment>
<evidence type="ECO:0000255" key="1">
    <source>
        <dbReference type="HAMAP-Rule" id="MF_00315"/>
    </source>
</evidence>
<feature type="chain" id="PRO_0000189089" description="1-deoxy-D-xylulose-5-phosphate synthase">
    <location>
        <begin position="1"/>
        <end position="620"/>
    </location>
</feature>
<feature type="binding site" evidence="1">
    <location>
        <position position="75"/>
    </location>
    <ligand>
        <name>thiamine diphosphate</name>
        <dbReference type="ChEBI" id="CHEBI:58937"/>
    </ligand>
</feature>
<feature type="binding site" evidence="1">
    <location>
        <begin position="116"/>
        <end position="118"/>
    </location>
    <ligand>
        <name>thiamine diphosphate</name>
        <dbReference type="ChEBI" id="CHEBI:58937"/>
    </ligand>
</feature>
<feature type="binding site" evidence="1">
    <location>
        <position position="147"/>
    </location>
    <ligand>
        <name>Mg(2+)</name>
        <dbReference type="ChEBI" id="CHEBI:18420"/>
    </ligand>
</feature>
<feature type="binding site" evidence="1">
    <location>
        <begin position="148"/>
        <end position="149"/>
    </location>
    <ligand>
        <name>thiamine diphosphate</name>
        <dbReference type="ChEBI" id="CHEBI:58937"/>
    </ligand>
</feature>
<feature type="binding site" evidence="1">
    <location>
        <position position="177"/>
    </location>
    <ligand>
        <name>Mg(2+)</name>
        <dbReference type="ChEBI" id="CHEBI:18420"/>
    </ligand>
</feature>
<feature type="binding site" evidence="1">
    <location>
        <position position="177"/>
    </location>
    <ligand>
        <name>thiamine diphosphate</name>
        <dbReference type="ChEBI" id="CHEBI:58937"/>
    </ligand>
</feature>
<feature type="binding site" evidence="1">
    <location>
        <position position="284"/>
    </location>
    <ligand>
        <name>thiamine diphosphate</name>
        <dbReference type="ChEBI" id="CHEBI:58937"/>
    </ligand>
</feature>
<feature type="binding site" evidence="1">
    <location>
        <position position="366"/>
    </location>
    <ligand>
        <name>thiamine diphosphate</name>
        <dbReference type="ChEBI" id="CHEBI:58937"/>
    </ligand>
</feature>
<protein>
    <recommendedName>
        <fullName evidence="1">1-deoxy-D-xylulose-5-phosphate synthase</fullName>
        <ecNumber evidence="1">2.2.1.7</ecNumber>
    </recommendedName>
    <alternativeName>
        <fullName evidence="1">1-deoxyxylulose-5-phosphate synthase</fullName>
        <shortName evidence="1">DXP synthase</shortName>
        <shortName evidence="1">DXPS</shortName>
    </alternativeName>
</protein>
<gene>
    <name evidence="1" type="primary">dxs</name>
    <name type="ordered locus">BPP2464</name>
</gene>
<accession>Q7W7Q0</accession>
<dbReference type="EC" id="2.2.1.7" evidence="1"/>
<dbReference type="EMBL" id="BX640430">
    <property type="protein sequence ID" value="CAE37759.1"/>
    <property type="molecule type" value="Genomic_DNA"/>
</dbReference>
<dbReference type="RefSeq" id="WP_003813105.1">
    <property type="nucleotide sequence ID" value="NC_002928.3"/>
</dbReference>
<dbReference type="SMR" id="Q7W7Q0"/>
<dbReference type="GeneID" id="93204248"/>
<dbReference type="KEGG" id="bpa:BPP2464"/>
<dbReference type="HOGENOM" id="CLU_009227_1_4_4"/>
<dbReference type="UniPathway" id="UPA00064">
    <property type="reaction ID" value="UER00091"/>
</dbReference>
<dbReference type="Proteomes" id="UP000001421">
    <property type="component" value="Chromosome"/>
</dbReference>
<dbReference type="GO" id="GO:0005829">
    <property type="term" value="C:cytosol"/>
    <property type="evidence" value="ECO:0007669"/>
    <property type="project" value="TreeGrafter"/>
</dbReference>
<dbReference type="GO" id="GO:0008661">
    <property type="term" value="F:1-deoxy-D-xylulose-5-phosphate synthase activity"/>
    <property type="evidence" value="ECO:0007669"/>
    <property type="project" value="UniProtKB-UniRule"/>
</dbReference>
<dbReference type="GO" id="GO:0000287">
    <property type="term" value="F:magnesium ion binding"/>
    <property type="evidence" value="ECO:0007669"/>
    <property type="project" value="UniProtKB-UniRule"/>
</dbReference>
<dbReference type="GO" id="GO:0030976">
    <property type="term" value="F:thiamine pyrophosphate binding"/>
    <property type="evidence" value="ECO:0007669"/>
    <property type="project" value="UniProtKB-UniRule"/>
</dbReference>
<dbReference type="GO" id="GO:0052865">
    <property type="term" value="P:1-deoxy-D-xylulose 5-phosphate biosynthetic process"/>
    <property type="evidence" value="ECO:0007669"/>
    <property type="project" value="UniProtKB-UniPathway"/>
</dbReference>
<dbReference type="GO" id="GO:0019288">
    <property type="term" value="P:isopentenyl diphosphate biosynthetic process, methylerythritol 4-phosphate pathway"/>
    <property type="evidence" value="ECO:0007669"/>
    <property type="project" value="TreeGrafter"/>
</dbReference>
<dbReference type="GO" id="GO:0016114">
    <property type="term" value="P:terpenoid biosynthetic process"/>
    <property type="evidence" value="ECO:0007669"/>
    <property type="project" value="UniProtKB-UniRule"/>
</dbReference>
<dbReference type="GO" id="GO:0009228">
    <property type="term" value="P:thiamine biosynthetic process"/>
    <property type="evidence" value="ECO:0007669"/>
    <property type="project" value="UniProtKB-UniRule"/>
</dbReference>
<dbReference type="CDD" id="cd02007">
    <property type="entry name" value="TPP_DXS"/>
    <property type="match status" value="1"/>
</dbReference>
<dbReference type="CDD" id="cd07033">
    <property type="entry name" value="TPP_PYR_DXS_TK_like"/>
    <property type="match status" value="1"/>
</dbReference>
<dbReference type="FunFam" id="3.40.50.920:FF:000002">
    <property type="entry name" value="1-deoxy-D-xylulose-5-phosphate synthase"/>
    <property type="match status" value="1"/>
</dbReference>
<dbReference type="FunFam" id="3.40.50.970:FF:000005">
    <property type="entry name" value="1-deoxy-D-xylulose-5-phosphate synthase"/>
    <property type="match status" value="1"/>
</dbReference>
<dbReference type="Gene3D" id="3.40.50.920">
    <property type="match status" value="1"/>
</dbReference>
<dbReference type="Gene3D" id="3.40.50.970">
    <property type="match status" value="2"/>
</dbReference>
<dbReference type="HAMAP" id="MF_00315">
    <property type="entry name" value="DXP_synth"/>
    <property type="match status" value="1"/>
</dbReference>
<dbReference type="InterPro" id="IPR005477">
    <property type="entry name" value="Dxylulose-5-P_synthase"/>
</dbReference>
<dbReference type="InterPro" id="IPR029061">
    <property type="entry name" value="THDP-binding"/>
</dbReference>
<dbReference type="InterPro" id="IPR009014">
    <property type="entry name" value="Transketo_C/PFOR_II"/>
</dbReference>
<dbReference type="InterPro" id="IPR005475">
    <property type="entry name" value="Transketolase-like_Pyr-bd"/>
</dbReference>
<dbReference type="InterPro" id="IPR020826">
    <property type="entry name" value="Transketolase_BS"/>
</dbReference>
<dbReference type="InterPro" id="IPR033248">
    <property type="entry name" value="Transketolase_C"/>
</dbReference>
<dbReference type="InterPro" id="IPR049557">
    <property type="entry name" value="Transketolase_CS"/>
</dbReference>
<dbReference type="NCBIfam" id="TIGR00204">
    <property type="entry name" value="dxs"/>
    <property type="match status" value="1"/>
</dbReference>
<dbReference type="NCBIfam" id="NF003933">
    <property type="entry name" value="PRK05444.2-2"/>
    <property type="match status" value="1"/>
</dbReference>
<dbReference type="PANTHER" id="PTHR43322">
    <property type="entry name" value="1-D-DEOXYXYLULOSE 5-PHOSPHATE SYNTHASE-RELATED"/>
    <property type="match status" value="1"/>
</dbReference>
<dbReference type="PANTHER" id="PTHR43322:SF5">
    <property type="entry name" value="1-DEOXY-D-XYLULOSE-5-PHOSPHATE SYNTHASE, CHLOROPLASTIC"/>
    <property type="match status" value="1"/>
</dbReference>
<dbReference type="Pfam" id="PF13292">
    <property type="entry name" value="DXP_synthase_N"/>
    <property type="match status" value="1"/>
</dbReference>
<dbReference type="Pfam" id="PF02779">
    <property type="entry name" value="Transket_pyr"/>
    <property type="match status" value="1"/>
</dbReference>
<dbReference type="Pfam" id="PF02780">
    <property type="entry name" value="Transketolase_C"/>
    <property type="match status" value="1"/>
</dbReference>
<dbReference type="SMART" id="SM00861">
    <property type="entry name" value="Transket_pyr"/>
    <property type="match status" value="1"/>
</dbReference>
<dbReference type="SUPFAM" id="SSF52518">
    <property type="entry name" value="Thiamin diphosphate-binding fold (THDP-binding)"/>
    <property type="match status" value="2"/>
</dbReference>
<dbReference type="SUPFAM" id="SSF52922">
    <property type="entry name" value="TK C-terminal domain-like"/>
    <property type="match status" value="1"/>
</dbReference>
<dbReference type="PROSITE" id="PS00801">
    <property type="entry name" value="TRANSKETOLASE_1"/>
    <property type="match status" value="1"/>
</dbReference>
<dbReference type="PROSITE" id="PS00802">
    <property type="entry name" value="TRANSKETOLASE_2"/>
    <property type="match status" value="1"/>
</dbReference>
<sequence>MTTELLDRILSPADLRQLDRRELKRLADELRGFVLESVSRTGGHLSSNLGTVELSLALHYVFDTPHDRIVWDVGHQSYPHKILTGRREGMAHLRQQGGISGFPKRSESEYDAFGTAHSSTSISAALGMAVASRNAGVQRQHIAVIGDGAMSAGMAFEAMNNAGVTPNINLLVVLNDNDMSISPPVGALNRYLARLMSGQFYAAAKNVGRAVLQHVPPVLELARRLEEHAKGMVTPATLFEEFGFNYVGPIDGHDLDALVPTLQNLRALPGLQFLHVVTRKGQGYKLAEADPVLYHGPGKFDPAVGIQQAKAPARKTFTQVFGQWLCDMAERDERLVGITPAMREGSGLVEFEQRFPQRYFDVGIAEQHAVTFAAGLACEGQKPVVAIYSTFLQRGYDQLVHDVALQNLDVTFALDRAGLVGADGATHAGNYDIAFLRCVPNMVVAAPSDESEARLLLSTCYEHPGPASVRYPRGAGCGAAVGEGLATVPLGKGLVRREGRRIAILGFGTLVQAALGAAGQIDATVADMRFVKPLDRELVLELAARHDALVTVEEAAIMGGAGSAVLETLAEAGVTLPVLQLGLPDAFIDHGDQAALLAGLGLDAAGIERAIRARFGALLA</sequence>
<keyword id="KW-0414">Isoprene biosynthesis</keyword>
<keyword id="KW-0460">Magnesium</keyword>
<keyword id="KW-0479">Metal-binding</keyword>
<keyword id="KW-0784">Thiamine biosynthesis</keyword>
<keyword id="KW-0786">Thiamine pyrophosphate</keyword>
<keyword id="KW-0808">Transferase</keyword>
<organism>
    <name type="scientific">Bordetella parapertussis (strain 12822 / ATCC BAA-587 / NCTC 13253)</name>
    <dbReference type="NCBI Taxonomy" id="257311"/>
    <lineage>
        <taxon>Bacteria</taxon>
        <taxon>Pseudomonadati</taxon>
        <taxon>Pseudomonadota</taxon>
        <taxon>Betaproteobacteria</taxon>
        <taxon>Burkholderiales</taxon>
        <taxon>Alcaligenaceae</taxon>
        <taxon>Bordetella</taxon>
    </lineage>
</organism>
<name>DXS_BORPA</name>
<proteinExistence type="inferred from homology"/>